<feature type="chain" id="PRO_0000093045" description="UvrABC system protein A">
    <location>
        <begin position="1"/>
        <end position="939"/>
    </location>
</feature>
<feature type="domain" description="ABC transporter 1" evidence="1">
    <location>
        <begin position="309"/>
        <end position="588"/>
    </location>
</feature>
<feature type="domain" description="ABC transporter 2" evidence="1">
    <location>
        <begin position="608"/>
        <end position="936"/>
    </location>
</feature>
<feature type="zinc finger region" description="C4-type" evidence="1">
    <location>
        <begin position="252"/>
        <end position="279"/>
    </location>
</feature>
<feature type="zinc finger region" description="C4-type" evidence="1">
    <location>
        <begin position="739"/>
        <end position="765"/>
    </location>
</feature>
<feature type="binding site" evidence="1">
    <location>
        <begin position="32"/>
        <end position="39"/>
    </location>
    <ligand>
        <name>ATP</name>
        <dbReference type="ChEBI" id="CHEBI:30616"/>
    </ligand>
</feature>
<feature type="binding site" evidence="1">
    <location>
        <begin position="640"/>
        <end position="647"/>
    </location>
    <ligand>
        <name>ATP</name>
        <dbReference type="ChEBI" id="CHEBI:30616"/>
    </ligand>
</feature>
<proteinExistence type="inferred from homology"/>
<reference key="1">
    <citation type="journal article" date="2001" name="J. Bacteriol.">
        <title>Genome sequence and comparative analysis of the solvent-producing bacterium Clostridium acetobutylicum.</title>
        <authorList>
            <person name="Noelling J."/>
            <person name="Breton G."/>
            <person name="Omelchenko M.V."/>
            <person name="Makarova K.S."/>
            <person name="Zeng Q."/>
            <person name="Gibson R."/>
            <person name="Lee H.M."/>
            <person name="Dubois J."/>
            <person name="Qiu D."/>
            <person name="Hitti J."/>
            <person name="Wolf Y.I."/>
            <person name="Tatusov R.L."/>
            <person name="Sabathe F."/>
            <person name="Doucette-Stamm L.A."/>
            <person name="Soucaille P."/>
            <person name="Daly M.J."/>
            <person name="Bennett G.N."/>
            <person name="Koonin E.V."/>
            <person name="Smith D.R."/>
        </authorList>
    </citation>
    <scope>NUCLEOTIDE SEQUENCE [LARGE SCALE GENOMIC DNA]</scope>
    <source>
        <strain>ATCC 824 / DSM 792 / JCM 1419 / IAM 19013 / LMG 5710 / NBRC 13948 / NRRL B-527 / VKM B-1787 / 2291 / W</strain>
    </source>
</reference>
<organism>
    <name type="scientific">Clostridium acetobutylicum (strain ATCC 824 / DSM 792 / JCM 1419 / IAM 19013 / LMG 5710 / NBRC 13948 / NRRL B-527 / VKM B-1787 / 2291 / W)</name>
    <dbReference type="NCBI Taxonomy" id="272562"/>
    <lineage>
        <taxon>Bacteria</taxon>
        <taxon>Bacillati</taxon>
        <taxon>Bacillota</taxon>
        <taxon>Clostridia</taxon>
        <taxon>Eubacteriales</taxon>
        <taxon>Clostridiaceae</taxon>
        <taxon>Clostridium</taxon>
    </lineage>
</organism>
<accession>Q97LQ1</accession>
<sequence length="939" mass="104524">MKDKIVIKGAKVHNLKNVDLTVPRNEFVVFTGLSGSGKSSLAFDTLYAEGQRRYMESLSSYARQFLGQMDKPNVEYIEGLSPAISIDQKTTGRNPRSTVGTVTEIYDYLRLLYAKIGVPHCPNCGKEISQQTVDQIVDSVMKLEERTKIQVLAPVVRGRKGEHTKLIAHIKKSGFVRVRIDGEVYEIDEDEIKLDKNKKHHIEALVDRIVIKQGVEGRLTDSVETALKLAEGLVVINVMGKEDMLFSENFACPDCGISIGEISPSMFSFNAPFGKCDVCDGIGTLLEIDEDLVIPDKSKSIMEGAIAPWGEGRLKEESWTFGVLKALSKKYKLDINKPIEDYDEKTLNILLYGAPDVLKVNYVKDSQEMVFNHHYEGIINQMKRRYMESNSDYIKSEIENYMSNNPCPKCKGARLKKEVLAITVGNKNIFEFCSMPIREEVSFIDTLELSNKHKIISAQIVKEIKSRLEFLINVGLDYLNLAREARTLSGGESQRIRLATQIGSSLVGVLYILDEPSIGLHQRDNDRLIATMKNLKDIGNTLIVVEHDEDTIKAADFIVDIGPGAGEHGGEIIAAGSLEDIKNCKESITGQYLTGVKKIEVPKERREAGKNFIEIVGAKENNLKNVNVKFPVGLFTCVTGVSGSGKSTLVNEILYKALNKKINRSKLNPGKYKSINGIENIDKIIDINQSPIGRTPRSNPATYTGVFDIIRELYASTKEAKLRGYKAGRFSFNVKGGRCEACKGDGIVRIEMQFLSDVYVPCDVCKGKRYNRETLEIKYKDKNIDDLLNMTVEDALKFFENLPRIKNKLQTLADVGLGYVRLGQPSTQLSGGEAQRIKLAYELSKRSTGKTLYILDEPTTGLHTDDVKKLISILQRLTDMGNTVVVIEHNLDVIKCADYIVDLGPEGGEKGGTILCSGTPEQVAQNSSSYTGQYLKKML</sequence>
<gene>
    <name evidence="1" type="primary">uvrA</name>
    <name type="ordered locus">CA_C0503</name>
</gene>
<name>UVRA_CLOAB</name>
<evidence type="ECO:0000255" key="1">
    <source>
        <dbReference type="HAMAP-Rule" id="MF_00205"/>
    </source>
</evidence>
<comment type="function">
    <text evidence="1">The UvrABC repair system catalyzes the recognition and processing of DNA lesions. UvrA is an ATPase and a DNA-binding protein. A damage recognition complex composed of 2 UvrA and 2 UvrB subunits scans DNA for abnormalities. When the presence of a lesion has been verified by UvrB, the UvrA molecules dissociate.</text>
</comment>
<comment type="subunit">
    <text evidence="1">Forms a heterotetramer with UvrB during the search for lesions.</text>
</comment>
<comment type="subcellular location">
    <subcellularLocation>
        <location evidence="1">Cytoplasm</location>
    </subcellularLocation>
</comment>
<comment type="similarity">
    <text evidence="1">Belongs to the ABC transporter superfamily. UvrA family.</text>
</comment>
<keyword id="KW-0067">ATP-binding</keyword>
<keyword id="KW-0963">Cytoplasm</keyword>
<keyword id="KW-0227">DNA damage</keyword>
<keyword id="KW-0228">DNA excision</keyword>
<keyword id="KW-0234">DNA repair</keyword>
<keyword id="KW-0238">DNA-binding</keyword>
<keyword id="KW-0267">Excision nuclease</keyword>
<keyword id="KW-0479">Metal-binding</keyword>
<keyword id="KW-0547">Nucleotide-binding</keyword>
<keyword id="KW-1185">Reference proteome</keyword>
<keyword id="KW-0677">Repeat</keyword>
<keyword id="KW-0742">SOS response</keyword>
<keyword id="KW-0813">Transport</keyword>
<keyword id="KW-0862">Zinc</keyword>
<keyword id="KW-0863">Zinc-finger</keyword>
<dbReference type="EMBL" id="AE001437">
    <property type="protein sequence ID" value="AAK78483.1"/>
    <property type="molecule type" value="Genomic_DNA"/>
</dbReference>
<dbReference type="PIR" id="H96961">
    <property type="entry name" value="H96961"/>
</dbReference>
<dbReference type="RefSeq" id="NP_347143.1">
    <property type="nucleotide sequence ID" value="NC_003030.1"/>
</dbReference>
<dbReference type="RefSeq" id="WP_010963825.1">
    <property type="nucleotide sequence ID" value="NC_003030.1"/>
</dbReference>
<dbReference type="SMR" id="Q97LQ1"/>
<dbReference type="STRING" id="272562.CA_C0503"/>
<dbReference type="GeneID" id="44997012"/>
<dbReference type="KEGG" id="cac:CA_C0503"/>
<dbReference type="PATRIC" id="fig|272562.8.peg.702"/>
<dbReference type="eggNOG" id="COG0178">
    <property type="taxonomic scope" value="Bacteria"/>
</dbReference>
<dbReference type="HOGENOM" id="CLU_001370_0_2_9"/>
<dbReference type="OrthoDB" id="9809851at2"/>
<dbReference type="Proteomes" id="UP000000814">
    <property type="component" value="Chromosome"/>
</dbReference>
<dbReference type="GO" id="GO:0005737">
    <property type="term" value="C:cytoplasm"/>
    <property type="evidence" value="ECO:0007669"/>
    <property type="project" value="UniProtKB-SubCell"/>
</dbReference>
<dbReference type="GO" id="GO:0009380">
    <property type="term" value="C:excinuclease repair complex"/>
    <property type="evidence" value="ECO:0007669"/>
    <property type="project" value="InterPro"/>
</dbReference>
<dbReference type="GO" id="GO:0005524">
    <property type="term" value="F:ATP binding"/>
    <property type="evidence" value="ECO:0007669"/>
    <property type="project" value="UniProtKB-UniRule"/>
</dbReference>
<dbReference type="GO" id="GO:0016887">
    <property type="term" value="F:ATP hydrolysis activity"/>
    <property type="evidence" value="ECO:0007669"/>
    <property type="project" value="InterPro"/>
</dbReference>
<dbReference type="GO" id="GO:0003677">
    <property type="term" value="F:DNA binding"/>
    <property type="evidence" value="ECO:0007669"/>
    <property type="project" value="UniProtKB-UniRule"/>
</dbReference>
<dbReference type="GO" id="GO:0009381">
    <property type="term" value="F:excinuclease ABC activity"/>
    <property type="evidence" value="ECO:0007669"/>
    <property type="project" value="UniProtKB-UniRule"/>
</dbReference>
<dbReference type="GO" id="GO:0008270">
    <property type="term" value="F:zinc ion binding"/>
    <property type="evidence" value="ECO:0007669"/>
    <property type="project" value="UniProtKB-UniRule"/>
</dbReference>
<dbReference type="GO" id="GO:0006289">
    <property type="term" value="P:nucleotide-excision repair"/>
    <property type="evidence" value="ECO:0007669"/>
    <property type="project" value="UniProtKB-UniRule"/>
</dbReference>
<dbReference type="GO" id="GO:0009432">
    <property type="term" value="P:SOS response"/>
    <property type="evidence" value="ECO:0007669"/>
    <property type="project" value="UniProtKB-UniRule"/>
</dbReference>
<dbReference type="CDD" id="cd03270">
    <property type="entry name" value="ABC_UvrA_I"/>
    <property type="match status" value="1"/>
</dbReference>
<dbReference type="CDD" id="cd03271">
    <property type="entry name" value="ABC_UvrA_II"/>
    <property type="match status" value="1"/>
</dbReference>
<dbReference type="FunFam" id="1.20.1580.10:FF:000002">
    <property type="entry name" value="UvrABC system protein A"/>
    <property type="match status" value="1"/>
</dbReference>
<dbReference type="Gene3D" id="1.10.8.280">
    <property type="entry name" value="ABC transporter ATPase domain-like"/>
    <property type="match status" value="1"/>
</dbReference>
<dbReference type="Gene3D" id="1.20.1580.10">
    <property type="entry name" value="ABC transporter ATPase like domain"/>
    <property type="match status" value="2"/>
</dbReference>
<dbReference type="Gene3D" id="3.30.1490.20">
    <property type="entry name" value="ATP-grasp fold, A domain"/>
    <property type="match status" value="1"/>
</dbReference>
<dbReference type="Gene3D" id="3.40.50.300">
    <property type="entry name" value="P-loop containing nucleotide triphosphate hydrolases"/>
    <property type="match status" value="2"/>
</dbReference>
<dbReference type="HAMAP" id="MF_00205">
    <property type="entry name" value="UvrA"/>
    <property type="match status" value="1"/>
</dbReference>
<dbReference type="InterPro" id="IPR003593">
    <property type="entry name" value="AAA+_ATPase"/>
</dbReference>
<dbReference type="InterPro" id="IPR003439">
    <property type="entry name" value="ABC_transporter-like_ATP-bd"/>
</dbReference>
<dbReference type="InterPro" id="IPR017871">
    <property type="entry name" value="ABC_transporter-like_CS"/>
</dbReference>
<dbReference type="InterPro" id="IPR013815">
    <property type="entry name" value="ATP_grasp_subdomain_1"/>
</dbReference>
<dbReference type="InterPro" id="IPR027417">
    <property type="entry name" value="P-loop_NTPase"/>
</dbReference>
<dbReference type="InterPro" id="IPR004602">
    <property type="entry name" value="UvrA"/>
</dbReference>
<dbReference type="InterPro" id="IPR041552">
    <property type="entry name" value="UvrA_DNA-bd"/>
</dbReference>
<dbReference type="InterPro" id="IPR041102">
    <property type="entry name" value="UvrA_inter"/>
</dbReference>
<dbReference type="NCBIfam" id="NF001503">
    <property type="entry name" value="PRK00349.1"/>
    <property type="match status" value="1"/>
</dbReference>
<dbReference type="NCBIfam" id="TIGR00630">
    <property type="entry name" value="uvra"/>
    <property type="match status" value="1"/>
</dbReference>
<dbReference type="PANTHER" id="PTHR43152">
    <property type="entry name" value="UVRABC SYSTEM PROTEIN A"/>
    <property type="match status" value="1"/>
</dbReference>
<dbReference type="PANTHER" id="PTHR43152:SF3">
    <property type="entry name" value="UVRABC SYSTEM PROTEIN A"/>
    <property type="match status" value="1"/>
</dbReference>
<dbReference type="Pfam" id="PF17755">
    <property type="entry name" value="UvrA_DNA-bind"/>
    <property type="match status" value="1"/>
</dbReference>
<dbReference type="Pfam" id="PF17760">
    <property type="entry name" value="UvrA_inter"/>
    <property type="match status" value="1"/>
</dbReference>
<dbReference type="SMART" id="SM00382">
    <property type="entry name" value="AAA"/>
    <property type="match status" value="1"/>
</dbReference>
<dbReference type="SUPFAM" id="SSF52540">
    <property type="entry name" value="P-loop containing nucleoside triphosphate hydrolases"/>
    <property type="match status" value="2"/>
</dbReference>
<dbReference type="PROSITE" id="PS00211">
    <property type="entry name" value="ABC_TRANSPORTER_1"/>
    <property type="match status" value="1"/>
</dbReference>
<dbReference type="PROSITE" id="PS50893">
    <property type="entry name" value="ABC_TRANSPORTER_2"/>
    <property type="match status" value="1"/>
</dbReference>
<protein>
    <recommendedName>
        <fullName evidence="1">UvrABC system protein A</fullName>
        <shortName evidence="1">UvrA protein</shortName>
    </recommendedName>
    <alternativeName>
        <fullName evidence="1">Excinuclease ABC subunit A</fullName>
    </alternativeName>
</protein>